<accession>A0Q0Q6</accession>
<feature type="chain" id="PRO_1000000097" description="Ribosome-binding factor A">
    <location>
        <begin position="1"/>
        <end position="121"/>
    </location>
</feature>
<sequence length="121" mass="14080">MARYRLGRINEEVKKEISNIIRDDIHDPRLTGMVSVTRVEVTNDLRYAKVFISIFGSDESKTETLEALKSSAGFIRREVGHRVKLRYTPEILLELDESIEHGMHINDLLSNLKEKKRNDNR</sequence>
<reference key="1">
    <citation type="journal article" date="2006" name="Nat. Biotechnol.">
        <title>The genome and transcriptomes of the anti-tumor agent Clostridium novyi-NT.</title>
        <authorList>
            <person name="Bettegowda C."/>
            <person name="Huang X."/>
            <person name="Lin J."/>
            <person name="Cheong I."/>
            <person name="Kohli M."/>
            <person name="Szabo S.A."/>
            <person name="Zhang X."/>
            <person name="Diaz L.A. Jr."/>
            <person name="Velculescu V.E."/>
            <person name="Parmigiani G."/>
            <person name="Kinzler K.W."/>
            <person name="Vogelstein B."/>
            <person name="Zhou S."/>
        </authorList>
    </citation>
    <scope>NUCLEOTIDE SEQUENCE [LARGE SCALE GENOMIC DNA]</scope>
    <source>
        <strain>NT</strain>
    </source>
</reference>
<organism>
    <name type="scientific">Clostridium novyi (strain NT)</name>
    <dbReference type="NCBI Taxonomy" id="386415"/>
    <lineage>
        <taxon>Bacteria</taxon>
        <taxon>Bacillati</taxon>
        <taxon>Bacillota</taxon>
        <taxon>Clostridia</taxon>
        <taxon>Eubacteriales</taxon>
        <taxon>Clostridiaceae</taxon>
        <taxon>Clostridium</taxon>
    </lineage>
</organism>
<comment type="function">
    <text evidence="1">One of several proteins that assist in the late maturation steps of the functional core of the 30S ribosomal subunit. Associates with free 30S ribosomal subunits (but not with 30S subunits that are part of 70S ribosomes or polysomes). Required for efficient processing of 16S rRNA. May interact with the 5'-terminal helix region of 16S rRNA.</text>
</comment>
<comment type="subunit">
    <text evidence="1">Monomer. Binds 30S ribosomal subunits, but not 50S ribosomal subunits or 70S ribosomes.</text>
</comment>
<comment type="subcellular location">
    <subcellularLocation>
        <location evidence="1">Cytoplasm</location>
    </subcellularLocation>
</comment>
<comment type="similarity">
    <text evidence="1">Belongs to the RbfA family.</text>
</comment>
<name>RBFA_CLONN</name>
<dbReference type="EMBL" id="CP000382">
    <property type="protein sequence ID" value="ABK61628.1"/>
    <property type="molecule type" value="Genomic_DNA"/>
</dbReference>
<dbReference type="RefSeq" id="WP_011722208.1">
    <property type="nucleotide sequence ID" value="NC_008593.1"/>
</dbReference>
<dbReference type="SMR" id="A0Q0Q6"/>
<dbReference type="STRING" id="386415.NT01CX_2135"/>
<dbReference type="KEGG" id="cno:NT01CX_2135"/>
<dbReference type="PATRIC" id="fig|386415.7.peg.1240"/>
<dbReference type="eggNOG" id="COG0858">
    <property type="taxonomic scope" value="Bacteria"/>
</dbReference>
<dbReference type="HOGENOM" id="CLU_089475_6_3_9"/>
<dbReference type="Proteomes" id="UP000008220">
    <property type="component" value="Chromosome"/>
</dbReference>
<dbReference type="GO" id="GO:0005829">
    <property type="term" value="C:cytosol"/>
    <property type="evidence" value="ECO:0007669"/>
    <property type="project" value="TreeGrafter"/>
</dbReference>
<dbReference type="GO" id="GO:0043024">
    <property type="term" value="F:ribosomal small subunit binding"/>
    <property type="evidence" value="ECO:0007669"/>
    <property type="project" value="TreeGrafter"/>
</dbReference>
<dbReference type="GO" id="GO:0030490">
    <property type="term" value="P:maturation of SSU-rRNA"/>
    <property type="evidence" value="ECO:0007669"/>
    <property type="project" value="UniProtKB-UniRule"/>
</dbReference>
<dbReference type="Gene3D" id="3.30.300.20">
    <property type="match status" value="1"/>
</dbReference>
<dbReference type="HAMAP" id="MF_00003">
    <property type="entry name" value="RbfA"/>
    <property type="match status" value="1"/>
</dbReference>
<dbReference type="InterPro" id="IPR015946">
    <property type="entry name" value="KH_dom-like_a/b"/>
</dbReference>
<dbReference type="InterPro" id="IPR000238">
    <property type="entry name" value="RbfA"/>
</dbReference>
<dbReference type="InterPro" id="IPR023799">
    <property type="entry name" value="RbfA_dom_sf"/>
</dbReference>
<dbReference type="NCBIfam" id="TIGR00082">
    <property type="entry name" value="rbfA"/>
    <property type="match status" value="1"/>
</dbReference>
<dbReference type="PANTHER" id="PTHR33515">
    <property type="entry name" value="RIBOSOME-BINDING FACTOR A, CHLOROPLASTIC-RELATED"/>
    <property type="match status" value="1"/>
</dbReference>
<dbReference type="PANTHER" id="PTHR33515:SF1">
    <property type="entry name" value="RIBOSOME-BINDING FACTOR A, CHLOROPLASTIC-RELATED"/>
    <property type="match status" value="1"/>
</dbReference>
<dbReference type="Pfam" id="PF02033">
    <property type="entry name" value="RBFA"/>
    <property type="match status" value="1"/>
</dbReference>
<dbReference type="SUPFAM" id="SSF89919">
    <property type="entry name" value="Ribosome-binding factor A, RbfA"/>
    <property type="match status" value="1"/>
</dbReference>
<proteinExistence type="inferred from homology"/>
<gene>
    <name evidence="1" type="primary">rbfA</name>
    <name type="ordered locus">NT01CX_2135</name>
</gene>
<evidence type="ECO:0000255" key="1">
    <source>
        <dbReference type="HAMAP-Rule" id="MF_00003"/>
    </source>
</evidence>
<keyword id="KW-0963">Cytoplasm</keyword>
<keyword id="KW-1185">Reference proteome</keyword>
<keyword id="KW-0690">Ribosome biogenesis</keyword>
<protein>
    <recommendedName>
        <fullName evidence="1">Ribosome-binding factor A</fullName>
    </recommendedName>
</protein>